<comment type="function">
    <text evidence="1 3">Acts as a suppressor component of the dual wtf meiotic drive system, and can suppress but not confer meiotic drive by compatible poisons (PubMed:30475921). Wtf meiotic drive systems promote unequal transmission of alleles from the parental zygote to progeny spores by encoding a poison and an antidote from the same locus; the poison is trans-acting and forms toxic aggregates in all spores within an ascus, wherease the antidote is spore-specific and targets aggregates for degradation by the vacuole (By similarity). Meiotic drive by wtf systems therefore lead to poisoning of all progeny that do not inherit the dual poison/antidote allele, or express a compatible antidote (PubMed:30475921).</text>
</comment>
<comment type="subunit">
    <text evidence="1 3">Homomer (By similarity). Interacts with other proteins that exhibit high sequence similarity (PubMed:30475921).</text>
</comment>
<comment type="subcellular location">
    <subcellularLocation>
        <location evidence="1 2">Spore membrane</location>
        <topology evidence="2">Multi-pass membrane protein</topology>
    </subcellularLocation>
    <subcellularLocation>
        <location evidence="1 2">Vacuole membrane</location>
        <topology evidence="2">Multi-pass membrane protein</topology>
    </subcellularLocation>
</comment>
<comment type="similarity">
    <text evidence="5">Belongs to the WTF family.</text>
</comment>
<name>WTF18_SCHPO</name>
<sequence length="372" mass="41209">MKNNYTSLKSPLDEEDELKTDHEIDLEKGLLPEYNSEEEGTLPLYSDISKLANPVPEDSSTGPTEIANPNVERRQEFKDSHPNIYFLLRLLISVLAVSVVFFTAWVCVNPLEKSIFGKVAFSVTIGITCPILFIATFCFFETWTQAVAQCIKVTVIFLAQCVKVTVIFLAQCVKVTAVFLAKCVKVIAVGLYNSKKDLVVTIWLAWVVICFILFGCVKDGRLNLNKALICSTCSISAALFFILLLVCIPIWTLKHMLFGLFQVLGVQSCVVIVTKGLMYLFDKHIDATGYEIEASSLFVIGNFLFFYEMECPGALKRMPKFIRNGIASFLEGIGNAFGGIGNAIGRIGNAFRGANDNNNNIPLEETEAESEV</sequence>
<protein>
    <recommendedName>
        <fullName evidence="4">Meiotic drive suppressor wtf18</fullName>
    </recommendedName>
</protein>
<dbReference type="EMBL" id="CU329672">
    <property type="protein sequence ID" value="CAK9841884.1"/>
    <property type="molecule type" value="Genomic_DNA"/>
</dbReference>
<dbReference type="EMBL" id="MH029505">
    <property type="protein sequence ID" value="AZA15116.1"/>
    <property type="molecule type" value="Genomic_DNA"/>
</dbReference>
<dbReference type="PIR" id="T41253">
    <property type="entry name" value="T41253"/>
</dbReference>
<dbReference type="SMR" id="O74495"/>
<dbReference type="BioGRID" id="275663">
    <property type="interactions" value="2"/>
</dbReference>
<dbReference type="STRING" id="284812.O74495"/>
<dbReference type="PaxDb" id="4896-SPCC285.07c.1"/>
<dbReference type="EnsemblFungi" id="SPCC285.07c.1">
    <property type="protein sequence ID" value="SPCC285.07c.1:pep"/>
    <property type="gene ID" value="SPCC285.07c"/>
</dbReference>
<dbReference type="PomBase" id="SPCC285.07c">
    <property type="gene designation" value="wtf18"/>
</dbReference>
<dbReference type="VEuPathDB" id="FungiDB:SPCC162.04c"/>
<dbReference type="VEuPathDB" id="FungiDB:SPCC285.07c"/>
<dbReference type="HOGENOM" id="CLU_763247_0_0_1"/>
<dbReference type="InParanoid" id="O74495"/>
<dbReference type="PRO" id="PR:O74495"/>
<dbReference type="Proteomes" id="UP000002485">
    <property type="component" value="Chromosome III"/>
</dbReference>
<dbReference type="GO" id="GO:0005737">
    <property type="term" value="C:cytoplasm"/>
    <property type="evidence" value="ECO:0000314"/>
    <property type="project" value="PomBase"/>
</dbReference>
<dbReference type="GO" id="GO:0016020">
    <property type="term" value="C:membrane"/>
    <property type="evidence" value="ECO:0007669"/>
    <property type="project" value="UniProtKB-KW"/>
</dbReference>
<dbReference type="GO" id="GO:0005774">
    <property type="term" value="C:vacuolar membrane"/>
    <property type="evidence" value="ECO:0007669"/>
    <property type="project" value="UniProtKB-SubCell"/>
</dbReference>
<dbReference type="GO" id="GO:0110134">
    <property type="term" value="P:meiotic drive"/>
    <property type="evidence" value="ECO:0007669"/>
    <property type="project" value="InterPro"/>
</dbReference>
<dbReference type="InterPro" id="IPR004982">
    <property type="entry name" value="WTF"/>
</dbReference>
<dbReference type="Pfam" id="PF03303">
    <property type="entry name" value="WTF"/>
    <property type="match status" value="2"/>
</dbReference>
<organism>
    <name type="scientific">Schizosaccharomyces pombe (strain 972 / ATCC 24843)</name>
    <name type="common">Fission yeast</name>
    <dbReference type="NCBI Taxonomy" id="284812"/>
    <lineage>
        <taxon>Eukaryota</taxon>
        <taxon>Fungi</taxon>
        <taxon>Dikarya</taxon>
        <taxon>Ascomycota</taxon>
        <taxon>Taphrinomycotina</taxon>
        <taxon>Schizosaccharomycetes</taxon>
        <taxon>Schizosaccharomycetales</taxon>
        <taxon>Schizosaccharomycetaceae</taxon>
        <taxon>Schizosaccharomyces</taxon>
    </lineage>
</organism>
<keyword id="KW-0472">Membrane</keyword>
<keyword id="KW-1185">Reference proteome</keyword>
<keyword id="KW-0812">Transmembrane</keyword>
<keyword id="KW-1133">Transmembrane helix</keyword>
<keyword id="KW-0926">Vacuole</keyword>
<accession>O74495</accession>
<accession>A0A3G6JAT4</accession>
<accession>A0AAN2L0Q3</accession>
<evidence type="ECO:0000250" key="1">
    <source>
        <dbReference type="UniProtKB" id="A0A218N034"/>
    </source>
</evidence>
<evidence type="ECO:0000255" key="2"/>
<evidence type="ECO:0000269" key="3">
    <source>
    </source>
</evidence>
<evidence type="ECO:0000303" key="4">
    <source>
    </source>
</evidence>
<evidence type="ECO:0000305" key="5"/>
<evidence type="ECO:0000312" key="6">
    <source>
        <dbReference type="PomBase" id="SPCC285.07c"/>
    </source>
</evidence>
<feature type="chain" id="PRO_0000193230" description="Meiotic drive suppressor wtf18">
    <location>
        <begin position="1"/>
        <end position="372"/>
    </location>
</feature>
<feature type="transmembrane region" description="Helical" evidence="2">
    <location>
        <begin position="86"/>
        <end position="106"/>
    </location>
</feature>
<feature type="transmembrane region" description="Helical" evidence="2">
    <location>
        <begin position="120"/>
        <end position="140"/>
    </location>
</feature>
<feature type="transmembrane region" description="Helical" evidence="2">
    <location>
        <begin position="153"/>
        <end position="173"/>
    </location>
</feature>
<feature type="transmembrane region" description="Helical" evidence="2">
    <location>
        <begin position="197"/>
        <end position="217"/>
    </location>
</feature>
<feature type="transmembrane region" description="Helical" evidence="2">
    <location>
        <begin position="233"/>
        <end position="253"/>
    </location>
</feature>
<feature type="transmembrane region" description="Helical" evidence="2">
    <location>
        <begin position="257"/>
        <end position="277"/>
    </location>
</feature>
<feature type="sequence variant" description="In strain: wtf18-2; suppresses meiotic drive by wtf13 isoform 2." evidence="3">
    <original>E</original>
    <variation>GGLGNAFG</variation>
    <location>
        <position position="331"/>
    </location>
</feature>
<feature type="sequence variant" description="In strain: wtf18-2; suppresses meiotic drive by wtf13 isoform 2." evidence="3">
    <original>NNIPLEETEA</original>
    <variation>DIPLGEMDV</variation>
    <location>
        <begin position="359"/>
        <end position="368"/>
    </location>
</feature>
<proteinExistence type="inferred from homology"/>
<gene>
    <name evidence="6" type="primary">wtf18</name>
    <name type="synonym">wtf5</name>
    <name evidence="6" type="ORF">SPCC285.07c</name>
</gene>
<reference key="1">
    <citation type="journal article" date="2018" name="PLoS Genet.">
        <title>A suppressor of a wtf poison-antidote meiotic driver acts via mimicry of the driver's antidote.</title>
        <authorList>
            <person name="Bravo Nunez M.A."/>
            <person name="Lange J.J."/>
            <person name="Zanders S.E."/>
        </authorList>
    </citation>
    <scope>NUCLEOTIDE SEQUENCE [GENOMIC DNA]</scope>
    <scope>REVISION OF GENE MODEL</scope>
    <scope>FUNCTION</scope>
    <scope>VARIANTS GLU-331 DELINS GLY-GLY-LEU-GLY-ASN-ALA-PHE-GLY-GLY AND 359-ASN--ALA-368 DELINS ASP-ILE-PRO-LEU-GLY-GLU-MET-ASP-VAL</scope>
    <scope>LACK OF ALTERNATIVE SPLICING</scope>
    <source>
        <strain>wtf18-2</strain>
    </source>
</reference>
<reference key="2">
    <citation type="journal article" date="2002" name="Nature">
        <title>The genome sequence of Schizosaccharomyces pombe.</title>
        <authorList>
            <person name="Wood V."/>
            <person name="Gwilliam R."/>
            <person name="Rajandream M.A."/>
            <person name="Lyne M.H."/>
            <person name="Lyne R."/>
            <person name="Stewart A."/>
            <person name="Sgouros J.G."/>
            <person name="Peat N."/>
            <person name="Hayles J."/>
            <person name="Baker S.G."/>
            <person name="Basham D."/>
            <person name="Bowman S."/>
            <person name="Brooks K."/>
            <person name="Brown D."/>
            <person name="Brown S."/>
            <person name="Chillingworth T."/>
            <person name="Churcher C.M."/>
            <person name="Collins M."/>
            <person name="Connor R."/>
            <person name="Cronin A."/>
            <person name="Davis P."/>
            <person name="Feltwell T."/>
            <person name="Fraser A."/>
            <person name="Gentles S."/>
            <person name="Goble A."/>
            <person name="Hamlin N."/>
            <person name="Harris D.E."/>
            <person name="Hidalgo J."/>
            <person name="Hodgson G."/>
            <person name="Holroyd S."/>
            <person name="Hornsby T."/>
            <person name="Howarth S."/>
            <person name="Huckle E.J."/>
            <person name="Hunt S."/>
            <person name="Jagels K."/>
            <person name="James K.D."/>
            <person name="Jones L."/>
            <person name="Jones M."/>
            <person name="Leather S."/>
            <person name="McDonald S."/>
            <person name="McLean J."/>
            <person name="Mooney P."/>
            <person name="Moule S."/>
            <person name="Mungall K.L."/>
            <person name="Murphy L.D."/>
            <person name="Niblett D."/>
            <person name="Odell C."/>
            <person name="Oliver K."/>
            <person name="O'Neil S."/>
            <person name="Pearson D."/>
            <person name="Quail M.A."/>
            <person name="Rabbinowitsch E."/>
            <person name="Rutherford K.M."/>
            <person name="Rutter S."/>
            <person name="Saunders D."/>
            <person name="Seeger K."/>
            <person name="Sharp S."/>
            <person name="Skelton J."/>
            <person name="Simmonds M.N."/>
            <person name="Squares R."/>
            <person name="Squares S."/>
            <person name="Stevens K."/>
            <person name="Taylor K."/>
            <person name="Taylor R.G."/>
            <person name="Tivey A."/>
            <person name="Walsh S.V."/>
            <person name="Warren T."/>
            <person name="Whitehead S."/>
            <person name="Woodward J.R."/>
            <person name="Volckaert G."/>
            <person name="Aert R."/>
            <person name="Robben J."/>
            <person name="Grymonprez B."/>
            <person name="Weltjens I."/>
            <person name="Vanstreels E."/>
            <person name="Rieger M."/>
            <person name="Schaefer M."/>
            <person name="Mueller-Auer S."/>
            <person name="Gabel C."/>
            <person name="Fuchs M."/>
            <person name="Duesterhoeft A."/>
            <person name="Fritzc C."/>
            <person name="Holzer E."/>
            <person name="Moestl D."/>
            <person name="Hilbert H."/>
            <person name="Borzym K."/>
            <person name="Langer I."/>
            <person name="Beck A."/>
            <person name="Lehrach H."/>
            <person name="Reinhardt R."/>
            <person name="Pohl T.M."/>
            <person name="Eger P."/>
            <person name="Zimmermann W."/>
            <person name="Wedler H."/>
            <person name="Wambutt R."/>
            <person name="Purnelle B."/>
            <person name="Goffeau A."/>
            <person name="Cadieu E."/>
            <person name="Dreano S."/>
            <person name="Gloux S."/>
            <person name="Lelaure V."/>
            <person name="Mottier S."/>
            <person name="Galibert F."/>
            <person name="Aves S.J."/>
            <person name="Xiang Z."/>
            <person name="Hunt C."/>
            <person name="Moore K."/>
            <person name="Hurst S.M."/>
            <person name="Lucas M."/>
            <person name="Rochet M."/>
            <person name="Gaillardin C."/>
            <person name="Tallada V.A."/>
            <person name="Garzon A."/>
            <person name="Thode G."/>
            <person name="Daga R.R."/>
            <person name="Cruzado L."/>
            <person name="Jimenez J."/>
            <person name="Sanchez M."/>
            <person name="del Rey F."/>
            <person name="Benito J."/>
            <person name="Dominguez A."/>
            <person name="Revuelta J.L."/>
            <person name="Moreno S."/>
            <person name="Armstrong J."/>
            <person name="Forsburg S.L."/>
            <person name="Cerutti L."/>
            <person name="Lowe T."/>
            <person name="McCombie W.R."/>
            <person name="Paulsen I."/>
            <person name="Potashkin J."/>
            <person name="Shpakovski G.V."/>
            <person name="Ussery D."/>
            <person name="Barrell B.G."/>
            <person name="Nurse P."/>
        </authorList>
    </citation>
    <scope>NUCLEOTIDE SEQUENCE [LARGE SCALE GENOMIC DNA]</scope>
    <source>
        <strain>972 / ATCC 24843</strain>
    </source>
</reference>
<reference key="3">
    <citation type="journal article" date="2011" name="Science">
        <title>Comparative functional genomics of the fission yeasts.</title>
        <authorList>
            <person name="Rhind N."/>
            <person name="Chen Z."/>
            <person name="Yassour M."/>
            <person name="Thompson D.A."/>
            <person name="Haas B.J."/>
            <person name="Habib N."/>
            <person name="Wapinski I."/>
            <person name="Roy S."/>
            <person name="Lin M.F."/>
            <person name="Heiman D.I."/>
            <person name="Young S.K."/>
            <person name="Furuya K."/>
            <person name="Guo Y."/>
            <person name="Pidoux A."/>
            <person name="Chen H.M."/>
            <person name="Robbertse B."/>
            <person name="Goldberg J.M."/>
            <person name="Aoki K."/>
            <person name="Bayne E.H."/>
            <person name="Berlin A.M."/>
            <person name="Desjardins C.A."/>
            <person name="Dobbs E."/>
            <person name="Dukaj L."/>
            <person name="Fan L."/>
            <person name="FitzGerald M.G."/>
            <person name="French C."/>
            <person name="Gujja S."/>
            <person name="Hansen K."/>
            <person name="Keifenheim D."/>
            <person name="Levin J.Z."/>
            <person name="Mosher R.A."/>
            <person name="Mueller C.A."/>
            <person name="Pfiffner J."/>
            <person name="Priest M."/>
            <person name="Russ C."/>
            <person name="Smialowska A."/>
            <person name="Swoboda P."/>
            <person name="Sykes S.M."/>
            <person name="Vaughn M."/>
            <person name="Vengrova S."/>
            <person name="Yoder R."/>
            <person name="Zeng Q."/>
            <person name="Allshire R."/>
            <person name="Baulcombe D."/>
            <person name="Birren B.W."/>
            <person name="Brown W."/>
            <person name="Ekwall K."/>
            <person name="Kellis M."/>
            <person name="Leatherwood J."/>
            <person name="Levin H."/>
            <person name="Margalit H."/>
            <person name="Martienssen R."/>
            <person name="Nieduszynski C.A."/>
            <person name="Spatafora J.W."/>
            <person name="Friedman N."/>
            <person name="Dalgaard J.Z."/>
            <person name="Baumann P."/>
            <person name="Niki H."/>
            <person name="Regev A."/>
            <person name="Nusbaum C."/>
        </authorList>
    </citation>
    <scope>REVISION OF GENE MODEL</scope>
</reference>
<reference key="4">
    <citation type="journal article" date="2019" name="Mol. Biol. Evol.">
        <title>Killer meiotic drive and dynamic evolution of the wtf gene family.</title>
        <authorList>
            <person name="Eickbush M.T."/>
            <person name="Young J.M."/>
            <person name="Zanders S.E."/>
        </authorList>
    </citation>
    <scope>GENE FAMILY</scope>
</reference>